<dbReference type="EC" id="2.4.2.9" evidence="2"/>
<dbReference type="EMBL" id="AP006716">
    <property type="protein sequence ID" value="BAE05025.1"/>
    <property type="molecule type" value="Genomic_DNA"/>
</dbReference>
<dbReference type="RefSeq" id="WP_011276001.1">
    <property type="nucleotide sequence ID" value="NC_007168.1"/>
</dbReference>
<dbReference type="SMR" id="Q4L5Q0"/>
<dbReference type="GeneID" id="93781094"/>
<dbReference type="KEGG" id="sha:SH1716"/>
<dbReference type="eggNOG" id="COG2065">
    <property type="taxonomic scope" value="Bacteria"/>
</dbReference>
<dbReference type="HOGENOM" id="CLU_094234_2_1_9"/>
<dbReference type="OrthoDB" id="9802227at2"/>
<dbReference type="Proteomes" id="UP000000543">
    <property type="component" value="Chromosome"/>
</dbReference>
<dbReference type="GO" id="GO:0003723">
    <property type="term" value="F:RNA binding"/>
    <property type="evidence" value="ECO:0007669"/>
    <property type="project" value="UniProtKB-UniRule"/>
</dbReference>
<dbReference type="GO" id="GO:0004845">
    <property type="term" value="F:uracil phosphoribosyltransferase activity"/>
    <property type="evidence" value="ECO:0007669"/>
    <property type="project" value="UniProtKB-UniRule"/>
</dbReference>
<dbReference type="GO" id="GO:0006353">
    <property type="term" value="P:DNA-templated transcription termination"/>
    <property type="evidence" value="ECO:0007669"/>
    <property type="project" value="UniProtKB-UniRule"/>
</dbReference>
<dbReference type="CDD" id="cd06223">
    <property type="entry name" value="PRTases_typeI"/>
    <property type="match status" value="1"/>
</dbReference>
<dbReference type="FunFam" id="3.40.50.2020:FF:000020">
    <property type="entry name" value="Bifunctional protein PyrR"/>
    <property type="match status" value="1"/>
</dbReference>
<dbReference type="Gene3D" id="3.40.50.2020">
    <property type="match status" value="1"/>
</dbReference>
<dbReference type="HAMAP" id="MF_01219">
    <property type="entry name" value="PyrR"/>
    <property type="match status" value="1"/>
</dbReference>
<dbReference type="InterPro" id="IPR000836">
    <property type="entry name" value="PRibTrfase_dom"/>
</dbReference>
<dbReference type="InterPro" id="IPR029057">
    <property type="entry name" value="PRTase-like"/>
</dbReference>
<dbReference type="InterPro" id="IPR023050">
    <property type="entry name" value="PyrR"/>
</dbReference>
<dbReference type="InterPro" id="IPR050137">
    <property type="entry name" value="PyrR_bifunctional"/>
</dbReference>
<dbReference type="NCBIfam" id="NF003546">
    <property type="entry name" value="PRK05205.1-2"/>
    <property type="match status" value="1"/>
</dbReference>
<dbReference type="NCBIfam" id="NF003548">
    <property type="entry name" value="PRK05205.1-4"/>
    <property type="match status" value="1"/>
</dbReference>
<dbReference type="NCBIfam" id="NF003549">
    <property type="entry name" value="PRK05205.1-5"/>
    <property type="match status" value="1"/>
</dbReference>
<dbReference type="PANTHER" id="PTHR11608">
    <property type="entry name" value="BIFUNCTIONAL PROTEIN PYRR"/>
    <property type="match status" value="1"/>
</dbReference>
<dbReference type="PANTHER" id="PTHR11608:SF0">
    <property type="entry name" value="BIFUNCTIONAL PROTEIN PYRR"/>
    <property type="match status" value="1"/>
</dbReference>
<dbReference type="Pfam" id="PF00156">
    <property type="entry name" value="Pribosyltran"/>
    <property type="match status" value="1"/>
</dbReference>
<dbReference type="SUPFAM" id="SSF53271">
    <property type="entry name" value="PRTase-like"/>
    <property type="match status" value="1"/>
</dbReference>
<proteinExistence type="inferred from homology"/>
<feature type="chain" id="PRO_0000183061" description="Bifunctional protein PyrR">
    <location>
        <begin position="1"/>
        <end position="175"/>
    </location>
</feature>
<feature type="short sequence motif" description="PRPP-binding" evidence="2">
    <location>
        <begin position="98"/>
        <end position="110"/>
    </location>
</feature>
<feature type="binding site" evidence="1">
    <location>
        <begin position="40"/>
        <end position="41"/>
    </location>
    <ligand>
        <name>substrate</name>
    </ligand>
</feature>
<feature type="binding site" evidence="1">
    <location>
        <begin position="102"/>
        <end position="110"/>
    </location>
    <ligand>
        <name>substrate</name>
    </ligand>
</feature>
<feature type="binding site" evidence="1">
    <location>
        <position position="135"/>
    </location>
    <ligand>
        <name>substrate</name>
    </ligand>
</feature>
<feature type="binding site" evidence="1">
    <location>
        <position position="159"/>
    </location>
    <ligand>
        <name>substrate</name>
    </ligand>
</feature>
<organism>
    <name type="scientific">Staphylococcus haemolyticus (strain JCSC1435)</name>
    <dbReference type="NCBI Taxonomy" id="279808"/>
    <lineage>
        <taxon>Bacteria</taxon>
        <taxon>Bacillati</taxon>
        <taxon>Bacillota</taxon>
        <taxon>Bacilli</taxon>
        <taxon>Bacillales</taxon>
        <taxon>Staphylococcaceae</taxon>
        <taxon>Staphylococcus</taxon>
    </lineage>
</organism>
<sequence>MSERIIMDEAAIQRTVTRMAHEILEYNKGTENLVLLGIKTRGEFLAIRIQDKINQIEQKIVPTGTIDITHFRDDIEIANKQITQDAIEIDADINDKVVIIIDDVLYTGRTVRASLDAILLHSRPIKIGLAALVDRGHRELPIRADFVGKNIPTSKEESVLVYLNEKDSQNAVIIE</sequence>
<keyword id="KW-0328">Glycosyltransferase</keyword>
<keyword id="KW-0694">RNA-binding</keyword>
<keyword id="KW-0804">Transcription</keyword>
<keyword id="KW-0805">Transcription regulation</keyword>
<keyword id="KW-0806">Transcription termination</keyword>
<keyword id="KW-0808">Transferase</keyword>
<name>PYRR_STAHJ</name>
<gene>
    <name evidence="2" type="primary">pyrR</name>
    <name type="ordered locus">SH1716</name>
</gene>
<comment type="function">
    <text evidence="2">Regulates transcriptional attenuation of the pyrimidine nucleotide (pyr) operon by binding in a uridine-dependent manner to specific sites on pyr mRNA. This disrupts an antiterminator hairpin in the RNA and favors formation of a downstream transcription terminator, leading to a reduced expression of downstream genes.</text>
</comment>
<comment type="function">
    <text evidence="2">Also displays a weak uracil phosphoribosyltransferase activity which is not physiologically significant.</text>
</comment>
<comment type="catalytic activity">
    <reaction evidence="2">
        <text>UMP + diphosphate = 5-phospho-alpha-D-ribose 1-diphosphate + uracil</text>
        <dbReference type="Rhea" id="RHEA:13017"/>
        <dbReference type="ChEBI" id="CHEBI:17568"/>
        <dbReference type="ChEBI" id="CHEBI:33019"/>
        <dbReference type="ChEBI" id="CHEBI:57865"/>
        <dbReference type="ChEBI" id="CHEBI:58017"/>
        <dbReference type="EC" id="2.4.2.9"/>
    </reaction>
</comment>
<comment type="subunit">
    <text evidence="2">Homodimer and homohexamer; in equilibrium.</text>
</comment>
<comment type="similarity">
    <text evidence="2">Belongs to the purine/pyrimidine phosphoribosyltransferase family. PyrR subfamily.</text>
</comment>
<reference key="1">
    <citation type="journal article" date="2005" name="J. Bacteriol.">
        <title>Whole-genome sequencing of Staphylococcus haemolyticus uncovers the extreme plasticity of its genome and the evolution of human-colonizing staphylococcal species.</title>
        <authorList>
            <person name="Takeuchi F."/>
            <person name="Watanabe S."/>
            <person name="Baba T."/>
            <person name="Yuzawa H."/>
            <person name="Ito T."/>
            <person name="Morimoto Y."/>
            <person name="Kuroda M."/>
            <person name="Cui L."/>
            <person name="Takahashi M."/>
            <person name="Ankai A."/>
            <person name="Baba S."/>
            <person name="Fukui S."/>
            <person name="Lee J.C."/>
            <person name="Hiramatsu K."/>
        </authorList>
    </citation>
    <scope>NUCLEOTIDE SEQUENCE [LARGE SCALE GENOMIC DNA]</scope>
    <source>
        <strain>JCSC1435</strain>
    </source>
</reference>
<evidence type="ECO:0000250" key="1"/>
<evidence type="ECO:0000255" key="2">
    <source>
        <dbReference type="HAMAP-Rule" id="MF_01219"/>
    </source>
</evidence>
<accession>Q4L5Q0</accession>
<protein>
    <recommendedName>
        <fullName evidence="2">Bifunctional protein PyrR</fullName>
    </recommendedName>
    <domain>
        <recommendedName>
            <fullName evidence="2">Pyrimidine operon regulatory protein</fullName>
        </recommendedName>
    </domain>
    <domain>
        <recommendedName>
            <fullName evidence="2">Uracil phosphoribosyltransferase</fullName>
            <shortName evidence="2">UPRTase</shortName>
            <ecNumber evidence="2">2.4.2.9</ecNumber>
        </recommendedName>
    </domain>
</protein>